<accession>Q7VQM2</accession>
<keyword id="KW-0963">Cytoplasm</keyword>
<keyword id="KW-1185">Reference proteome</keyword>
<keyword id="KW-0690">Ribosome biogenesis</keyword>
<feature type="chain" id="PRO_0000102641" description="Ribosome-binding factor A">
    <location>
        <begin position="1"/>
        <end position="117"/>
    </location>
</feature>
<proteinExistence type="inferred from homology"/>
<sequence length="117" mass="13606">MYTKRINRLQRISQEIQRKVAIIIHHKVHDPRVGLPTISGVQVSRDLKNAKIFITFLDKNNIEEINFSILILQKASGFIRFLLANSMNLRTVPVLLFKYDYSLKEGIKICKLISQLK</sequence>
<comment type="function">
    <text evidence="1">One of several proteins that assist in the late maturation steps of the functional core of the 30S ribosomal subunit. Associates with free 30S ribosomal subunits (but not with 30S subunits that are part of 70S ribosomes or polysomes). Required for efficient processing of 16S rRNA. May interact with the 5'-terminal helix region of 16S rRNA.</text>
</comment>
<comment type="subunit">
    <text evidence="1">Monomer. Binds 30S ribosomal subunits, but not 50S ribosomal subunits or 70S ribosomes.</text>
</comment>
<comment type="subcellular location">
    <subcellularLocation>
        <location evidence="1">Cytoplasm</location>
    </subcellularLocation>
</comment>
<comment type="similarity">
    <text evidence="1">Belongs to the RbfA family.</text>
</comment>
<name>RBFA_BLOFL</name>
<protein>
    <recommendedName>
        <fullName evidence="1">Ribosome-binding factor A</fullName>
    </recommendedName>
</protein>
<reference key="1">
    <citation type="journal article" date="2003" name="Proc. Natl. Acad. Sci. U.S.A.">
        <title>The genome sequence of Blochmannia floridanus: comparative analysis of reduced genomes.</title>
        <authorList>
            <person name="Gil R."/>
            <person name="Silva F.J."/>
            <person name="Zientz E."/>
            <person name="Delmotte F."/>
            <person name="Gonzalez-Candelas F."/>
            <person name="Latorre A."/>
            <person name="Rausell C."/>
            <person name="Kamerbeek J."/>
            <person name="Gadau J."/>
            <person name="Hoelldobler B."/>
            <person name="van Ham R.C.H.J."/>
            <person name="Gross R."/>
            <person name="Moya A."/>
        </authorList>
    </citation>
    <scope>NUCLEOTIDE SEQUENCE [LARGE SCALE GENOMIC DNA]</scope>
</reference>
<gene>
    <name evidence="1" type="primary">rbfA</name>
    <name type="ordered locus">Bfl105</name>
</gene>
<organism>
    <name type="scientific">Blochmanniella floridana</name>
    <dbReference type="NCBI Taxonomy" id="203907"/>
    <lineage>
        <taxon>Bacteria</taxon>
        <taxon>Pseudomonadati</taxon>
        <taxon>Pseudomonadota</taxon>
        <taxon>Gammaproteobacteria</taxon>
        <taxon>Enterobacterales</taxon>
        <taxon>Enterobacteriaceae</taxon>
        <taxon>ant endosymbionts</taxon>
        <taxon>Candidatus Blochmanniella</taxon>
    </lineage>
</organism>
<evidence type="ECO:0000255" key="1">
    <source>
        <dbReference type="HAMAP-Rule" id="MF_00003"/>
    </source>
</evidence>
<dbReference type="EMBL" id="BX248583">
    <property type="protein sequence ID" value="CAD83626.1"/>
    <property type="molecule type" value="Genomic_DNA"/>
</dbReference>
<dbReference type="SMR" id="Q7VQM2"/>
<dbReference type="STRING" id="203907.Bfl105"/>
<dbReference type="KEGG" id="bfl:Bfl105"/>
<dbReference type="eggNOG" id="COG0858">
    <property type="taxonomic scope" value="Bacteria"/>
</dbReference>
<dbReference type="HOGENOM" id="CLU_089475_5_0_6"/>
<dbReference type="OrthoDB" id="307788at2"/>
<dbReference type="Proteomes" id="UP000002192">
    <property type="component" value="Chromosome"/>
</dbReference>
<dbReference type="GO" id="GO:0005829">
    <property type="term" value="C:cytosol"/>
    <property type="evidence" value="ECO:0007669"/>
    <property type="project" value="TreeGrafter"/>
</dbReference>
<dbReference type="GO" id="GO:0043024">
    <property type="term" value="F:ribosomal small subunit binding"/>
    <property type="evidence" value="ECO:0007669"/>
    <property type="project" value="TreeGrafter"/>
</dbReference>
<dbReference type="GO" id="GO:0030490">
    <property type="term" value="P:maturation of SSU-rRNA"/>
    <property type="evidence" value="ECO:0007669"/>
    <property type="project" value="UniProtKB-UniRule"/>
</dbReference>
<dbReference type="Gene3D" id="3.30.300.20">
    <property type="match status" value="1"/>
</dbReference>
<dbReference type="HAMAP" id="MF_00003">
    <property type="entry name" value="RbfA"/>
    <property type="match status" value="1"/>
</dbReference>
<dbReference type="InterPro" id="IPR015946">
    <property type="entry name" value="KH_dom-like_a/b"/>
</dbReference>
<dbReference type="InterPro" id="IPR000238">
    <property type="entry name" value="RbfA"/>
</dbReference>
<dbReference type="InterPro" id="IPR023799">
    <property type="entry name" value="RbfA_dom_sf"/>
</dbReference>
<dbReference type="InterPro" id="IPR020053">
    <property type="entry name" value="Ribosome-bd_factorA_CS"/>
</dbReference>
<dbReference type="NCBIfam" id="TIGR00082">
    <property type="entry name" value="rbfA"/>
    <property type="match status" value="1"/>
</dbReference>
<dbReference type="PANTHER" id="PTHR33515">
    <property type="entry name" value="RIBOSOME-BINDING FACTOR A, CHLOROPLASTIC-RELATED"/>
    <property type="match status" value="1"/>
</dbReference>
<dbReference type="PANTHER" id="PTHR33515:SF1">
    <property type="entry name" value="RIBOSOME-BINDING FACTOR A, CHLOROPLASTIC-RELATED"/>
    <property type="match status" value="1"/>
</dbReference>
<dbReference type="Pfam" id="PF02033">
    <property type="entry name" value="RBFA"/>
    <property type="match status" value="1"/>
</dbReference>
<dbReference type="SUPFAM" id="SSF89919">
    <property type="entry name" value="Ribosome-binding factor A, RbfA"/>
    <property type="match status" value="1"/>
</dbReference>
<dbReference type="PROSITE" id="PS01319">
    <property type="entry name" value="RBFA"/>
    <property type="match status" value="1"/>
</dbReference>